<gene>
    <name evidence="1" type="primary">csrA</name>
    <name type="ordered locus">GK3133</name>
</gene>
<dbReference type="EMBL" id="BA000043">
    <property type="protein sequence ID" value="BAD77418.1"/>
    <property type="molecule type" value="Genomic_DNA"/>
</dbReference>
<dbReference type="RefSeq" id="WP_011232603.1">
    <property type="nucleotide sequence ID" value="NC_006510.1"/>
</dbReference>
<dbReference type="SMR" id="Q5KV68"/>
<dbReference type="STRING" id="235909.GK3133"/>
<dbReference type="KEGG" id="gka:GK3133"/>
<dbReference type="PATRIC" id="fig|235909.7.peg.3343"/>
<dbReference type="eggNOG" id="COG1551">
    <property type="taxonomic scope" value="Bacteria"/>
</dbReference>
<dbReference type="HOGENOM" id="CLU_164837_0_2_9"/>
<dbReference type="Proteomes" id="UP000001172">
    <property type="component" value="Chromosome"/>
</dbReference>
<dbReference type="GO" id="GO:0005829">
    <property type="term" value="C:cytosol"/>
    <property type="evidence" value="ECO:0007669"/>
    <property type="project" value="TreeGrafter"/>
</dbReference>
<dbReference type="GO" id="GO:0048027">
    <property type="term" value="F:mRNA 5'-UTR binding"/>
    <property type="evidence" value="ECO:0007669"/>
    <property type="project" value="UniProtKB-UniRule"/>
</dbReference>
<dbReference type="GO" id="GO:0044781">
    <property type="term" value="P:bacterial-type flagellum organization"/>
    <property type="evidence" value="ECO:0007669"/>
    <property type="project" value="UniProtKB-KW"/>
</dbReference>
<dbReference type="GO" id="GO:0006402">
    <property type="term" value="P:mRNA catabolic process"/>
    <property type="evidence" value="ECO:0007669"/>
    <property type="project" value="InterPro"/>
</dbReference>
<dbReference type="GO" id="GO:0045947">
    <property type="term" value="P:negative regulation of translational initiation"/>
    <property type="evidence" value="ECO:0007669"/>
    <property type="project" value="UniProtKB-UniRule"/>
</dbReference>
<dbReference type="GO" id="GO:1902208">
    <property type="term" value="P:regulation of bacterial-type flagellum assembly"/>
    <property type="evidence" value="ECO:0007669"/>
    <property type="project" value="UniProtKB-UniRule"/>
</dbReference>
<dbReference type="GO" id="GO:0006109">
    <property type="term" value="P:regulation of carbohydrate metabolic process"/>
    <property type="evidence" value="ECO:0007669"/>
    <property type="project" value="InterPro"/>
</dbReference>
<dbReference type="FunFam" id="2.60.40.4380:FF:000002">
    <property type="entry name" value="Translational regulator CsrA"/>
    <property type="match status" value="1"/>
</dbReference>
<dbReference type="Gene3D" id="2.60.40.4380">
    <property type="entry name" value="Translational regulator CsrA"/>
    <property type="match status" value="1"/>
</dbReference>
<dbReference type="HAMAP" id="MF_00167">
    <property type="entry name" value="CsrA"/>
    <property type="match status" value="1"/>
</dbReference>
<dbReference type="InterPro" id="IPR003751">
    <property type="entry name" value="CsrA"/>
</dbReference>
<dbReference type="InterPro" id="IPR036107">
    <property type="entry name" value="CsrA_sf"/>
</dbReference>
<dbReference type="NCBIfam" id="TIGR00202">
    <property type="entry name" value="csrA"/>
    <property type="match status" value="1"/>
</dbReference>
<dbReference type="NCBIfam" id="NF002469">
    <property type="entry name" value="PRK01712.1"/>
    <property type="match status" value="1"/>
</dbReference>
<dbReference type="PANTHER" id="PTHR34984">
    <property type="entry name" value="CARBON STORAGE REGULATOR"/>
    <property type="match status" value="1"/>
</dbReference>
<dbReference type="PANTHER" id="PTHR34984:SF1">
    <property type="entry name" value="CARBON STORAGE REGULATOR"/>
    <property type="match status" value="1"/>
</dbReference>
<dbReference type="Pfam" id="PF02599">
    <property type="entry name" value="CsrA"/>
    <property type="match status" value="1"/>
</dbReference>
<dbReference type="SUPFAM" id="SSF117130">
    <property type="entry name" value="CsrA-like"/>
    <property type="match status" value="1"/>
</dbReference>
<feature type="chain" id="PRO_1000023383" description="Translational regulator CsrA">
    <location>
        <begin position="1"/>
        <end position="82"/>
    </location>
</feature>
<comment type="function">
    <text evidence="1">A translational regulator that binds mRNA to regulate translation initiation and/or mRNA stability. Usually binds in the 5'-UTR at or near the Shine-Dalgarno sequence preventing ribosome-binding, thus repressing translation. Its main target seems to be the major flagellin gene, while its function is anatagonized by FliW.</text>
</comment>
<comment type="subunit">
    <text evidence="1">Homodimer; the beta-strands of each monomer intercalate to form a hydrophobic core, while the alpha-helices form wings that extend away from the core.</text>
</comment>
<comment type="subcellular location">
    <subcellularLocation>
        <location evidence="1">Cytoplasm</location>
    </subcellularLocation>
</comment>
<comment type="similarity">
    <text evidence="1">Belongs to the CsrA/RsmA family.</text>
</comment>
<reference key="1">
    <citation type="journal article" date="2004" name="Nucleic Acids Res.">
        <title>Thermoadaptation trait revealed by the genome sequence of thermophilic Geobacillus kaustophilus.</title>
        <authorList>
            <person name="Takami H."/>
            <person name="Takaki Y."/>
            <person name="Chee G.-J."/>
            <person name="Nishi S."/>
            <person name="Shimamura S."/>
            <person name="Suzuki H."/>
            <person name="Matsui S."/>
            <person name="Uchiyama I."/>
        </authorList>
    </citation>
    <scope>NUCLEOTIDE SEQUENCE [LARGE SCALE GENOMIC DNA]</scope>
    <source>
        <strain>HTA426</strain>
    </source>
</reference>
<sequence length="82" mass="9116">MLVLTRKLKEAIQIGDDIEITVLVIQGDQVKLGINAPKHVEIHRKEIYLAIQAENNAASFASKTSLERLTEQLKHLKGGKQA</sequence>
<proteinExistence type="inferred from homology"/>
<accession>Q5KV68</accession>
<evidence type="ECO:0000255" key="1">
    <source>
        <dbReference type="HAMAP-Rule" id="MF_00167"/>
    </source>
</evidence>
<keyword id="KW-1005">Bacterial flagellum biogenesis</keyword>
<keyword id="KW-0963">Cytoplasm</keyword>
<keyword id="KW-1185">Reference proteome</keyword>
<keyword id="KW-0678">Repressor</keyword>
<keyword id="KW-0694">RNA-binding</keyword>
<keyword id="KW-0810">Translation regulation</keyword>
<name>CSRA_GEOKA</name>
<protein>
    <recommendedName>
        <fullName evidence="1">Translational regulator CsrA</fullName>
    </recommendedName>
</protein>
<organism>
    <name type="scientific">Geobacillus kaustophilus (strain HTA426)</name>
    <dbReference type="NCBI Taxonomy" id="235909"/>
    <lineage>
        <taxon>Bacteria</taxon>
        <taxon>Bacillati</taxon>
        <taxon>Bacillota</taxon>
        <taxon>Bacilli</taxon>
        <taxon>Bacillales</taxon>
        <taxon>Anoxybacillaceae</taxon>
        <taxon>Geobacillus</taxon>
        <taxon>Geobacillus thermoleovorans group</taxon>
    </lineage>
</organism>